<feature type="chain" id="PRO_0000305575" description="Pantothenate synthetase">
    <location>
        <begin position="1"/>
        <end position="288"/>
    </location>
</feature>
<feature type="active site" description="Proton donor" evidence="1">
    <location>
        <position position="38"/>
    </location>
</feature>
<feature type="binding site" evidence="1">
    <location>
        <begin position="31"/>
        <end position="38"/>
    </location>
    <ligand>
        <name>ATP</name>
        <dbReference type="ChEBI" id="CHEBI:30616"/>
    </ligand>
</feature>
<feature type="binding site" evidence="1">
    <location>
        <position position="62"/>
    </location>
    <ligand>
        <name>(R)-pantoate</name>
        <dbReference type="ChEBI" id="CHEBI:15980"/>
    </ligand>
</feature>
<feature type="binding site" evidence="1">
    <location>
        <position position="62"/>
    </location>
    <ligand>
        <name>beta-alanine</name>
        <dbReference type="ChEBI" id="CHEBI:57966"/>
    </ligand>
</feature>
<feature type="binding site" evidence="1">
    <location>
        <begin position="150"/>
        <end position="153"/>
    </location>
    <ligand>
        <name>ATP</name>
        <dbReference type="ChEBI" id="CHEBI:30616"/>
    </ligand>
</feature>
<feature type="binding site" evidence="1">
    <location>
        <position position="156"/>
    </location>
    <ligand>
        <name>(R)-pantoate</name>
        <dbReference type="ChEBI" id="CHEBI:15980"/>
    </ligand>
</feature>
<feature type="binding site" evidence="1">
    <location>
        <position position="179"/>
    </location>
    <ligand>
        <name>ATP</name>
        <dbReference type="ChEBI" id="CHEBI:30616"/>
    </ligand>
</feature>
<feature type="binding site" evidence="1">
    <location>
        <begin position="187"/>
        <end position="190"/>
    </location>
    <ligand>
        <name>ATP</name>
        <dbReference type="ChEBI" id="CHEBI:30616"/>
    </ligand>
</feature>
<reference key="1">
    <citation type="journal article" date="2002" name="Nat. Genet.">
        <title>Genome sequence of the endocellular obligate symbiont of tsetse flies, Wigglesworthia glossinidia.</title>
        <authorList>
            <person name="Akman L."/>
            <person name="Yamashita A."/>
            <person name="Watanabe H."/>
            <person name="Oshima K."/>
            <person name="Shiba T."/>
            <person name="Hattori M."/>
            <person name="Aksoy S."/>
        </authorList>
    </citation>
    <scope>NUCLEOTIDE SEQUENCE [LARGE SCALE GENOMIC DNA]</scope>
</reference>
<evidence type="ECO:0000255" key="1">
    <source>
        <dbReference type="HAMAP-Rule" id="MF_00158"/>
    </source>
</evidence>
<dbReference type="EC" id="6.3.2.1" evidence="1"/>
<dbReference type="EMBL" id="BA000021">
    <property type="protein sequence ID" value="BAC24594.1"/>
    <property type="molecule type" value="Genomic_DNA"/>
</dbReference>
<dbReference type="SMR" id="Q8D2A6"/>
<dbReference type="STRING" id="36870.gene:10368951"/>
<dbReference type="KEGG" id="wbr:panC"/>
<dbReference type="eggNOG" id="COG0414">
    <property type="taxonomic scope" value="Bacteria"/>
</dbReference>
<dbReference type="HOGENOM" id="CLU_047148_0_0_6"/>
<dbReference type="OrthoDB" id="9773087at2"/>
<dbReference type="UniPathway" id="UPA00028">
    <property type="reaction ID" value="UER00005"/>
</dbReference>
<dbReference type="Proteomes" id="UP000000562">
    <property type="component" value="Chromosome"/>
</dbReference>
<dbReference type="GO" id="GO:0005829">
    <property type="term" value="C:cytosol"/>
    <property type="evidence" value="ECO:0007669"/>
    <property type="project" value="TreeGrafter"/>
</dbReference>
<dbReference type="GO" id="GO:0005524">
    <property type="term" value="F:ATP binding"/>
    <property type="evidence" value="ECO:0007669"/>
    <property type="project" value="UniProtKB-KW"/>
</dbReference>
<dbReference type="GO" id="GO:0004592">
    <property type="term" value="F:pantoate-beta-alanine ligase activity"/>
    <property type="evidence" value="ECO:0007669"/>
    <property type="project" value="UniProtKB-UniRule"/>
</dbReference>
<dbReference type="GO" id="GO:0015940">
    <property type="term" value="P:pantothenate biosynthetic process"/>
    <property type="evidence" value="ECO:0007669"/>
    <property type="project" value="UniProtKB-UniRule"/>
</dbReference>
<dbReference type="CDD" id="cd00560">
    <property type="entry name" value="PanC"/>
    <property type="match status" value="1"/>
</dbReference>
<dbReference type="Gene3D" id="3.40.50.620">
    <property type="entry name" value="HUPs"/>
    <property type="match status" value="1"/>
</dbReference>
<dbReference type="Gene3D" id="3.30.1300.10">
    <property type="entry name" value="Pantoate-beta-alanine ligase, C-terminal domain"/>
    <property type="match status" value="1"/>
</dbReference>
<dbReference type="HAMAP" id="MF_00158">
    <property type="entry name" value="PanC"/>
    <property type="match status" value="1"/>
</dbReference>
<dbReference type="InterPro" id="IPR003721">
    <property type="entry name" value="Pantoate_ligase"/>
</dbReference>
<dbReference type="InterPro" id="IPR042176">
    <property type="entry name" value="Pantoate_ligase_C"/>
</dbReference>
<dbReference type="InterPro" id="IPR014729">
    <property type="entry name" value="Rossmann-like_a/b/a_fold"/>
</dbReference>
<dbReference type="NCBIfam" id="TIGR00018">
    <property type="entry name" value="panC"/>
    <property type="match status" value="1"/>
</dbReference>
<dbReference type="PANTHER" id="PTHR21299">
    <property type="entry name" value="CYTIDYLATE KINASE/PANTOATE-BETA-ALANINE LIGASE"/>
    <property type="match status" value="1"/>
</dbReference>
<dbReference type="PANTHER" id="PTHR21299:SF1">
    <property type="entry name" value="PANTOATE--BETA-ALANINE LIGASE"/>
    <property type="match status" value="1"/>
</dbReference>
<dbReference type="Pfam" id="PF02569">
    <property type="entry name" value="Pantoate_ligase"/>
    <property type="match status" value="1"/>
</dbReference>
<dbReference type="SUPFAM" id="SSF52374">
    <property type="entry name" value="Nucleotidylyl transferase"/>
    <property type="match status" value="1"/>
</dbReference>
<organism>
    <name type="scientific">Wigglesworthia glossinidia brevipalpis</name>
    <dbReference type="NCBI Taxonomy" id="36870"/>
    <lineage>
        <taxon>Bacteria</taxon>
        <taxon>Pseudomonadati</taxon>
        <taxon>Pseudomonadota</taxon>
        <taxon>Gammaproteobacteria</taxon>
        <taxon>Enterobacterales</taxon>
        <taxon>Erwiniaceae</taxon>
        <taxon>Wigglesworthia</taxon>
    </lineage>
</organism>
<name>PANC_WIGBR</name>
<gene>
    <name evidence="1" type="primary">panC</name>
    <name type="ordered locus">WIGBR4480</name>
</gene>
<proteinExistence type="inferred from homology"/>
<accession>Q8D2A6</accession>
<keyword id="KW-0067">ATP-binding</keyword>
<keyword id="KW-0963">Cytoplasm</keyword>
<keyword id="KW-0436">Ligase</keyword>
<keyword id="KW-0547">Nucleotide-binding</keyword>
<keyword id="KW-0566">Pantothenate biosynthesis</keyword>
<keyword id="KW-1185">Reference proteome</keyword>
<sequence length="288" mass="33075">MLIIKKSSELTCVIKNLKKKNKSKIALIPTMGNLHRGHLELIKIGKLKSNILIISIFINPAQFSNSKDFRNYPKTLNEDIKKLIEYKVDILFCPTLKSMYPFGYKNHTLVNVVQYSSILDGKTMSNHFIGVATIISKLFNLINPDIAIFGQKDFQQLIMIRQLVLHMNYNIKILSAPIIRCFDGLALSSRNRHLSLEERKKAPKIYNILLELSKKIKLNKLYNLKKDYDAILKNYLIKLNNYGFKVEVLSIRNAKNLMPIDENSKQAVILCSAKIGSIRLVDNIKIKL</sequence>
<comment type="function">
    <text evidence="1">Catalyzes the condensation of pantoate with beta-alanine in an ATP-dependent reaction via a pantoyl-adenylate intermediate.</text>
</comment>
<comment type="catalytic activity">
    <reaction evidence="1">
        <text>(R)-pantoate + beta-alanine + ATP = (R)-pantothenate + AMP + diphosphate + H(+)</text>
        <dbReference type="Rhea" id="RHEA:10912"/>
        <dbReference type="ChEBI" id="CHEBI:15378"/>
        <dbReference type="ChEBI" id="CHEBI:15980"/>
        <dbReference type="ChEBI" id="CHEBI:29032"/>
        <dbReference type="ChEBI" id="CHEBI:30616"/>
        <dbReference type="ChEBI" id="CHEBI:33019"/>
        <dbReference type="ChEBI" id="CHEBI:57966"/>
        <dbReference type="ChEBI" id="CHEBI:456215"/>
        <dbReference type="EC" id="6.3.2.1"/>
    </reaction>
</comment>
<comment type="pathway">
    <text evidence="1">Cofactor biosynthesis; (R)-pantothenate biosynthesis; (R)-pantothenate from (R)-pantoate and beta-alanine: step 1/1.</text>
</comment>
<comment type="subunit">
    <text evidence="1">Homodimer.</text>
</comment>
<comment type="subcellular location">
    <subcellularLocation>
        <location evidence="1">Cytoplasm</location>
    </subcellularLocation>
</comment>
<comment type="miscellaneous">
    <text evidence="1">The reaction proceeds by a bi uni uni bi ping pong mechanism.</text>
</comment>
<comment type="similarity">
    <text evidence="1">Belongs to the pantothenate synthetase family.</text>
</comment>
<protein>
    <recommendedName>
        <fullName evidence="1">Pantothenate synthetase</fullName>
        <shortName evidence="1">PS</shortName>
        <ecNumber evidence="1">6.3.2.1</ecNumber>
    </recommendedName>
    <alternativeName>
        <fullName evidence="1">Pantoate--beta-alanine ligase</fullName>
    </alternativeName>
    <alternativeName>
        <fullName evidence="1">Pantoate-activating enzyme</fullName>
    </alternativeName>
</protein>